<evidence type="ECO:0000255" key="1">
    <source>
        <dbReference type="HAMAP-Rule" id="MF_01338"/>
    </source>
</evidence>
<comment type="function">
    <text evidence="1">RuBisCO catalyzes two reactions: the carboxylation of D-ribulose 1,5-bisphosphate, the primary event in carbon dioxide fixation, as well as the oxidative fragmentation of the pentose substrate in the photorespiration process. Both reactions occur simultaneously and in competition at the same active site.</text>
</comment>
<comment type="catalytic activity">
    <reaction evidence="1">
        <text>2 (2R)-3-phosphoglycerate + 2 H(+) = D-ribulose 1,5-bisphosphate + CO2 + H2O</text>
        <dbReference type="Rhea" id="RHEA:23124"/>
        <dbReference type="ChEBI" id="CHEBI:15377"/>
        <dbReference type="ChEBI" id="CHEBI:15378"/>
        <dbReference type="ChEBI" id="CHEBI:16526"/>
        <dbReference type="ChEBI" id="CHEBI:57870"/>
        <dbReference type="ChEBI" id="CHEBI:58272"/>
        <dbReference type="EC" id="4.1.1.39"/>
    </reaction>
</comment>
<comment type="catalytic activity">
    <reaction evidence="1">
        <text>D-ribulose 1,5-bisphosphate + O2 = 2-phosphoglycolate + (2R)-3-phosphoglycerate + 2 H(+)</text>
        <dbReference type="Rhea" id="RHEA:36631"/>
        <dbReference type="ChEBI" id="CHEBI:15378"/>
        <dbReference type="ChEBI" id="CHEBI:15379"/>
        <dbReference type="ChEBI" id="CHEBI:57870"/>
        <dbReference type="ChEBI" id="CHEBI:58033"/>
        <dbReference type="ChEBI" id="CHEBI:58272"/>
    </reaction>
</comment>
<comment type="cofactor">
    <cofactor evidence="1">
        <name>Mg(2+)</name>
        <dbReference type="ChEBI" id="CHEBI:18420"/>
    </cofactor>
    <text evidence="1">Binds 1 Mg(2+) ion per subunit.</text>
</comment>
<comment type="subunit">
    <text evidence="1">Heterohexadecamer of 8 large chains and 8 small chains; disulfide-linked. The disulfide link is formed within the large subunit homodimers.</text>
</comment>
<comment type="subcellular location">
    <subcellularLocation>
        <location>Plastid</location>
        <location>Chloroplast</location>
    </subcellularLocation>
</comment>
<comment type="PTM">
    <text evidence="1">The disulfide bond which can form in the large chain dimeric partners within the hexadecamer appears to be associated with oxidative stress and protein turnover.</text>
</comment>
<comment type="miscellaneous">
    <text evidence="1">The basic functional RuBisCO is composed of a large chain homodimer in a 'head-to-tail' conformation. In form I RuBisCO this homodimer is arranged in a barrel-like tetramer with the small subunits forming a tetrameric 'cap' on each end of the 'barrel'.</text>
</comment>
<comment type="similarity">
    <text evidence="1">Belongs to the RuBisCO large chain family. Type I subfamily.</text>
</comment>
<geneLocation type="chloroplast"/>
<name>RBL_PHYAM</name>
<gene>
    <name evidence="1" type="primary">rbcL</name>
</gene>
<keyword id="KW-0007">Acetylation</keyword>
<keyword id="KW-0113">Calvin cycle</keyword>
<keyword id="KW-0120">Carbon dioxide fixation</keyword>
<keyword id="KW-0150">Chloroplast</keyword>
<keyword id="KW-1015">Disulfide bond</keyword>
<keyword id="KW-0456">Lyase</keyword>
<keyword id="KW-0460">Magnesium</keyword>
<keyword id="KW-0479">Metal-binding</keyword>
<keyword id="KW-0488">Methylation</keyword>
<keyword id="KW-0503">Monooxygenase</keyword>
<keyword id="KW-0560">Oxidoreductase</keyword>
<keyword id="KW-0601">Photorespiration</keyword>
<keyword id="KW-0602">Photosynthesis</keyword>
<keyword id="KW-0934">Plastid</keyword>
<sequence length="482" mass="53321">MSPQTETKASVGFKAGVKDYKLNYYTPEYKPQDTDILAAFRVTPQPGVPSEEAGAAVAAESSTGTWTTVWTDGLTSLDRYKGRCYHIDPVAGEDNQYICYVAYPLDLFEEGSVTNMFTSIVGNVFGFKALRALRLEDLRIPIAYIKTFQGPPHGIQVERDKLNKYGRPLLGCTIKPKLGLSAKNYGRAVYECLRGGLDFTKDDENVNSQPFMRWRDRLLFCAEALYKAQAETGEIKGHYLNATAGTCEEMIKRAVFARELGAPIVMHDYLTGGFTANTTLAHYCRDNGLLLHIHRAMHALIDRQKNHGMHFRVLAKALRLSGGDHIHAGTVVGKLEGERDITLGFVDLLRDDHTEIDDARGIYFTQSWVSTPGVLPVASGGIHVWHMPALTEIFGDDSVLQFGGGTLGHPWGNAPGRVANRVALEACVQARNEGRDLASEGNVIIREASKWSPELAAACEVWKEIKFEFPAVDVFHKGKKKN</sequence>
<organism>
    <name type="scientific">Phytolacca americana</name>
    <name type="common">American pokeweed</name>
    <name type="synonym">Phytolacca decandra</name>
    <dbReference type="NCBI Taxonomy" id="3527"/>
    <lineage>
        <taxon>Eukaryota</taxon>
        <taxon>Viridiplantae</taxon>
        <taxon>Streptophyta</taxon>
        <taxon>Embryophyta</taxon>
        <taxon>Tracheophyta</taxon>
        <taxon>Spermatophyta</taxon>
        <taxon>Magnoliopsida</taxon>
        <taxon>eudicotyledons</taxon>
        <taxon>Gunneridae</taxon>
        <taxon>Pentapetalae</taxon>
        <taxon>Caryophyllales</taxon>
        <taxon>Phytolaccaceae</taxon>
        <taxon>Phytolacca</taxon>
    </lineage>
</organism>
<proteinExistence type="inferred from homology"/>
<protein>
    <recommendedName>
        <fullName evidence="1">Ribulose bisphosphate carboxylase large chain</fullName>
        <shortName evidence="1">RuBisCO large subunit</shortName>
        <ecNumber evidence="1">4.1.1.39</ecNumber>
    </recommendedName>
</protein>
<dbReference type="EC" id="4.1.1.39" evidence="1"/>
<dbReference type="EMBL" id="M62567">
    <property type="protein sequence ID" value="AAA84565.1"/>
    <property type="molecule type" value="Genomic_DNA"/>
</dbReference>
<dbReference type="SMR" id="P25833"/>
<dbReference type="GO" id="GO:0009507">
    <property type="term" value="C:chloroplast"/>
    <property type="evidence" value="ECO:0007669"/>
    <property type="project" value="UniProtKB-SubCell"/>
</dbReference>
<dbReference type="GO" id="GO:0000287">
    <property type="term" value="F:magnesium ion binding"/>
    <property type="evidence" value="ECO:0007669"/>
    <property type="project" value="UniProtKB-UniRule"/>
</dbReference>
<dbReference type="GO" id="GO:0004497">
    <property type="term" value="F:monooxygenase activity"/>
    <property type="evidence" value="ECO:0007669"/>
    <property type="project" value="UniProtKB-KW"/>
</dbReference>
<dbReference type="GO" id="GO:0016984">
    <property type="term" value="F:ribulose-bisphosphate carboxylase activity"/>
    <property type="evidence" value="ECO:0007669"/>
    <property type="project" value="UniProtKB-UniRule"/>
</dbReference>
<dbReference type="GO" id="GO:0009853">
    <property type="term" value="P:photorespiration"/>
    <property type="evidence" value="ECO:0007669"/>
    <property type="project" value="UniProtKB-KW"/>
</dbReference>
<dbReference type="GO" id="GO:0019253">
    <property type="term" value="P:reductive pentose-phosphate cycle"/>
    <property type="evidence" value="ECO:0007669"/>
    <property type="project" value="UniProtKB-UniRule"/>
</dbReference>
<dbReference type="CDD" id="cd08212">
    <property type="entry name" value="RuBisCO_large_I"/>
    <property type="match status" value="1"/>
</dbReference>
<dbReference type="FunFam" id="3.20.20.110:FF:000001">
    <property type="entry name" value="Ribulose bisphosphate carboxylase large chain"/>
    <property type="match status" value="1"/>
</dbReference>
<dbReference type="FunFam" id="3.30.70.150:FF:000001">
    <property type="entry name" value="Ribulose bisphosphate carboxylase large chain"/>
    <property type="match status" value="1"/>
</dbReference>
<dbReference type="Gene3D" id="3.20.20.110">
    <property type="entry name" value="Ribulose bisphosphate carboxylase, large subunit, C-terminal domain"/>
    <property type="match status" value="1"/>
</dbReference>
<dbReference type="Gene3D" id="3.30.70.150">
    <property type="entry name" value="RuBisCO large subunit, N-terminal domain"/>
    <property type="match status" value="1"/>
</dbReference>
<dbReference type="HAMAP" id="MF_01338">
    <property type="entry name" value="RuBisCO_L_type1"/>
    <property type="match status" value="1"/>
</dbReference>
<dbReference type="InterPro" id="IPR033966">
    <property type="entry name" value="RuBisCO"/>
</dbReference>
<dbReference type="InterPro" id="IPR020878">
    <property type="entry name" value="RuBisCo_large_chain_AS"/>
</dbReference>
<dbReference type="InterPro" id="IPR000685">
    <property type="entry name" value="RuBisCO_lsu_C"/>
</dbReference>
<dbReference type="InterPro" id="IPR036376">
    <property type="entry name" value="RuBisCO_lsu_C_sf"/>
</dbReference>
<dbReference type="InterPro" id="IPR017443">
    <property type="entry name" value="RuBisCO_lsu_fd_N"/>
</dbReference>
<dbReference type="InterPro" id="IPR036422">
    <property type="entry name" value="RuBisCO_lsu_N_sf"/>
</dbReference>
<dbReference type="InterPro" id="IPR020888">
    <property type="entry name" value="RuBisCO_lsuI"/>
</dbReference>
<dbReference type="NCBIfam" id="NF003252">
    <property type="entry name" value="PRK04208.1"/>
    <property type="match status" value="1"/>
</dbReference>
<dbReference type="PANTHER" id="PTHR42704">
    <property type="entry name" value="RIBULOSE BISPHOSPHATE CARBOXYLASE"/>
    <property type="match status" value="1"/>
</dbReference>
<dbReference type="PANTHER" id="PTHR42704:SF15">
    <property type="entry name" value="RIBULOSE BISPHOSPHATE CARBOXYLASE LARGE CHAIN"/>
    <property type="match status" value="1"/>
</dbReference>
<dbReference type="Pfam" id="PF00016">
    <property type="entry name" value="RuBisCO_large"/>
    <property type="match status" value="1"/>
</dbReference>
<dbReference type="Pfam" id="PF02788">
    <property type="entry name" value="RuBisCO_large_N"/>
    <property type="match status" value="1"/>
</dbReference>
<dbReference type="SFLD" id="SFLDG01052">
    <property type="entry name" value="RuBisCO"/>
    <property type="match status" value="1"/>
</dbReference>
<dbReference type="SFLD" id="SFLDS00014">
    <property type="entry name" value="RuBisCO"/>
    <property type="match status" value="1"/>
</dbReference>
<dbReference type="SFLD" id="SFLDG00301">
    <property type="entry name" value="RuBisCO-like_proteins"/>
    <property type="match status" value="1"/>
</dbReference>
<dbReference type="SUPFAM" id="SSF51649">
    <property type="entry name" value="RuBisCo, C-terminal domain"/>
    <property type="match status" value="1"/>
</dbReference>
<dbReference type="SUPFAM" id="SSF54966">
    <property type="entry name" value="RuBisCO, large subunit, small (N-terminal) domain"/>
    <property type="match status" value="1"/>
</dbReference>
<dbReference type="PROSITE" id="PS00157">
    <property type="entry name" value="RUBISCO_LARGE"/>
    <property type="match status" value="1"/>
</dbReference>
<feature type="propeptide" id="PRO_0000031345" evidence="1">
    <location>
        <begin position="1"/>
        <end position="2"/>
    </location>
</feature>
<feature type="chain" id="PRO_0000031346" description="Ribulose bisphosphate carboxylase large chain">
    <location>
        <begin position="3"/>
        <end position="482"/>
    </location>
</feature>
<feature type="active site" description="Proton acceptor" evidence="1">
    <location>
        <position position="175"/>
    </location>
</feature>
<feature type="active site" description="Proton acceptor" evidence="1">
    <location>
        <position position="294"/>
    </location>
</feature>
<feature type="binding site" description="in homodimeric partner" evidence="1">
    <location>
        <position position="123"/>
    </location>
    <ligand>
        <name>substrate</name>
    </ligand>
</feature>
<feature type="binding site" evidence="1">
    <location>
        <position position="173"/>
    </location>
    <ligand>
        <name>substrate</name>
    </ligand>
</feature>
<feature type="binding site" evidence="1">
    <location>
        <position position="177"/>
    </location>
    <ligand>
        <name>substrate</name>
    </ligand>
</feature>
<feature type="binding site" description="via carbamate group" evidence="1">
    <location>
        <position position="201"/>
    </location>
    <ligand>
        <name>Mg(2+)</name>
        <dbReference type="ChEBI" id="CHEBI:18420"/>
    </ligand>
</feature>
<feature type="binding site" evidence="1">
    <location>
        <position position="203"/>
    </location>
    <ligand>
        <name>Mg(2+)</name>
        <dbReference type="ChEBI" id="CHEBI:18420"/>
    </ligand>
</feature>
<feature type="binding site" evidence="1">
    <location>
        <position position="204"/>
    </location>
    <ligand>
        <name>Mg(2+)</name>
        <dbReference type="ChEBI" id="CHEBI:18420"/>
    </ligand>
</feature>
<feature type="binding site" evidence="1">
    <location>
        <position position="295"/>
    </location>
    <ligand>
        <name>substrate</name>
    </ligand>
</feature>
<feature type="binding site" evidence="1">
    <location>
        <position position="327"/>
    </location>
    <ligand>
        <name>substrate</name>
    </ligand>
</feature>
<feature type="binding site" evidence="1">
    <location>
        <position position="379"/>
    </location>
    <ligand>
        <name>substrate</name>
    </ligand>
</feature>
<feature type="site" description="Transition state stabilizer" evidence="1">
    <location>
        <position position="334"/>
    </location>
</feature>
<feature type="modified residue" description="N-acetylproline" evidence="1">
    <location>
        <position position="3"/>
    </location>
</feature>
<feature type="modified residue" description="N6,N6,N6-trimethyllysine" evidence="1">
    <location>
        <position position="14"/>
    </location>
</feature>
<feature type="modified residue" description="N6-carboxylysine" evidence="1">
    <location>
        <position position="201"/>
    </location>
</feature>
<feature type="disulfide bond" description="Interchain; in linked form" evidence="1">
    <location>
        <position position="247"/>
    </location>
</feature>
<reference key="1">
    <citation type="submission" date="1991-12" db="EMBL/GenBank/DDBJ databases">
        <title>Systematics of Caryophyllales using large subunit of ribulose-1, 5-bisphosphate carboxylase/oxygenase (rbcL) gene sequence data.</title>
        <authorList>
            <person name="Rettig J.H."/>
            <person name="Wilson H.D."/>
            <person name="Manhart J.R."/>
        </authorList>
    </citation>
    <scope>NUCLEOTIDE SEQUENCE [GENOMIC DNA]</scope>
</reference>
<accession>P25833</accession>